<name>SYL_RHOP5</name>
<proteinExistence type="inferred from homology"/>
<reference key="1">
    <citation type="submission" date="2006-09" db="EMBL/GenBank/DDBJ databases">
        <title>Complete sequence of Rhodopseudomonas palustris BisA53.</title>
        <authorList>
            <consortium name="US DOE Joint Genome Institute"/>
            <person name="Copeland A."/>
            <person name="Lucas S."/>
            <person name="Lapidus A."/>
            <person name="Barry K."/>
            <person name="Detter J.C."/>
            <person name="Glavina del Rio T."/>
            <person name="Hammon N."/>
            <person name="Israni S."/>
            <person name="Dalin E."/>
            <person name="Tice H."/>
            <person name="Pitluck S."/>
            <person name="Chain P."/>
            <person name="Malfatti S."/>
            <person name="Shin M."/>
            <person name="Vergez L."/>
            <person name="Schmutz J."/>
            <person name="Larimer F."/>
            <person name="Land M."/>
            <person name="Hauser L."/>
            <person name="Pelletier D.A."/>
            <person name="Kyrpides N."/>
            <person name="Kim E."/>
            <person name="Harwood C.S."/>
            <person name="Oda Y."/>
            <person name="Richardson P."/>
        </authorList>
    </citation>
    <scope>NUCLEOTIDE SEQUENCE [LARGE SCALE GENOMIC DNA]</scope>
    <source>
        <strain>BisA53</strain>
    </source>
</reference>
<comment type="catalytic activity">
    <reaction evidence="1">
        <text>tRNA(Leu) + L-leucine + ATP = L-leucyl-tRNA(Leu) + AMP + diphosphate</text>
        <dbReference type="Rhea" id="RHEA:11688"/>
        <dbReference type="Rhea" id="RHEA-COMP:9613"/>
        <dbReference type="Rhea" id="RHEA-COMP:9622"/>
        <dbReference type="ChEBI" id="CHEBI:30616"/>
        <dbReference type="ChEBI" id="CHEBI:33019"/>
        <dbReference type="ChEBI" id="CHEBI:57427"/>
        <dbReference type="ChEBI" id="CHEBI:78442"/>
        <dbReference type="ChEBI" id="CHEBI:78494"/>
        <dbReference type="ChEBI" id="CHEBI:456215"/>
        <dbReference type="EC" id="6.1.1.4"/>
    </reaction>
</comment>
<comment type="subcellular location">
    <subcellularLocation>
        <location evidence="1">Cytoplasm</location>
    </subcellularLocation>
</comment>
<comment type="similarity">
    <text evidence="1">Belongs to the class-I aminoacyl-tRNA synthetase family.</text>
</comment>
<protein>
    <recommendedName>
        <fullName evidence="1">Leucine--tRNA ligase</fullName>
        <ecNumber evidence="1">6.1.1.4</ecNumber>
    </recommendedName>
    <alternativeName>
        <fullName evidence="1">Leucyl-tRNA synthetase</fullName>
        <shortName evidence="1">LeuRS</shortName>
    </alternativeName>
</protein>
<dbReference type="EC" id="6.1.1.4" evidence="1"/>
<dbReference type="EMBL" id="CP000463">
    <property type="protein sequence ID" value="ABJ04349.1"/>
    <property type="molecule type" value="Genomic_DNA"/>
</dbReference>
<dbReference type="SMR" id="Q07UN5"/>
<dbReference type="STRING" id="316055.RPE_0390"/>
<dbReference type="KEGG" id="rpe:RPE_0390"/>
<dbReference type="eggNOG" id="COG0495">
    <property type="taxonomic scope" value="Bacteria"/>
</dbReference>
<dbReference type="HOGENOM" id="CLU_004427_0_0_5"/>
<dbReference type="OrthoDB" id="9810365at2"/>
<dbReference type="GO" id="GO:0005829">
    <property type="term" value="C:cytosol"/>
    <property type="evidence" value="ECO:0007669"/>
    <property type="project" value="TreeGrafter"/>
</dbReference>
<dbReference type="GO" id="GO:0002161">
    <property type="term" value="F:aminoacyl-tRNA deacylase activity"/>
    <property type="evidence" value="ECO:0007669"/>
    <property type="project" value="InterPro"/>
</dbReference>
<dbReference type="GO" id="GO:0005524">
    <property type="term" value="F:ATP binding"/>
    <property type="evidence" value="ECO:0007669"/>
    <property type="project" value="UniProtKB-UniRule"/>
</dbReference>
<dbReference type="GO" id="GO:0004823">
    <property type="term" value="F:leucine-tRNA ligase activity"/>
    <property type="evidence" value="ECO:0007669"/>
    <property type="project" value="UniProtKB-UniRule"/>
</dbReference>
<dbReference type="GO" id="GO:0006429">
    <property type="term" value="P:leucyl-tRNA aminoacylation"/>
    <property type="evidence" value="ECO:0007669"/>
    <property type="project" value="UniProtKB-UniRule"/>
</dbReference>
<dbReference type="CDD" id="cd07958">
    <property type="entry name" value="Anticodon_Ia_Leu_BEm"/>
    <property type="match status" value="1"/>
</dbReference>
<dbReference type="CDD" id="cd00812">
    <property type="entry name" value="LeuRS_core"/>
    <property type="match status" value="1"/>
</dbReference>
<dbReference type="FunFam" id="1.10.730.10:FF:000002">
    <property type="entry name" value="Leucine--tRNA ligase"/>
    <property type="match status" value="1"/>
</dbReference>
<dbReference type="FunFam" id="3.40.50.620:FF:000003">
    <property type="entry name" value="Leucine--tRNA ligase"/>
    <property type="match status" value="1"/>
</dbReference>
<dbReference type="Gene3D" id="2.20.28.290">
    <property type="match status" value="1"/>
</dbReference>
<dbReference type="Gene3D" id="3.10.20.590">
    <property type="match status" value="1"/>
</dbReference>
<dbReference type="Gene3D" id="3.40.50.620">
    <property type="entry name" value="HUPs"/>
    <property type="match status" value="2"/>
</dbReference>
<dbReference type="Gene3D" id="1.10.730.10">
    <property type="entry name" value="Isoleucyl-tRNA Synthetase, Domain 1"/>
    <property type="match status" value="2"/>
</dbReference>
<dbReference type="HAMAP" id="MF_00049_B">
    <property type="entry name" value="Leu_tRNA_synth_B"/>
    <property type="match status" value="1"/>
</dbReference>
<dbReference type="InterPro" id="IPR001412">
    <property type="entry name" value="aa-tRNA-synth_I_CS"/>
</dbReference>
<dbReference type="InterPro" id="IPR002300">
    <property type="entry name" value="aa-tRNA-synth_Ia"/>
</dbReference>
<dbReference type="InterPro" id="IPR002302">
    <property type="entry name" value="Leu-tRNA-ligase"/>
</dbReference>
<dbReference type="InterPro" id="IPR025709">
    <property type="entry name" value="Leu_tRNA-synth_edit"/>
</dbReference>
<dbReference type="InterPro" id="IPR013155">
    <property type="entry name" value="M/V/L/I-tRNA-synth_anticd-bd"/>
</dbReference>
<dbReference type="InterPro" id="IPR015413">
    <property type="entry name" value="Methionyl/Leucyl_tRNA_Synth"/>
</dbReference>
<dbReference type="InterPro" id="IPR014729">
    <property type="entry name" value="Rossmann-like_a/b/a_fold"/>
</dbReference>
<dbReference type="InterPro" id="IPR009080">
    <property type="entry name" value="tRNAsynth_Ia_anticodon-bd"/>
</dbReference>
<dbReference type="InterPro" id="IPR009008">
    <property type="entry name" value="Val/Leu/Ile-tRNA-synth_edit"/>
</dbReference>
<dbReference type="NCBIfam" id="TIGR00396">
    <property type="entry name" value="leuS_bact"/>
    <property type="match status" value="1"/>
</dbReference>
<dbReference type="PANTHER" id="PTHR43740:SF2">
    <property type="entry name" value="LEUCINE--TRNA LIGASE, MITOCHONDRIAL"/>
    <property type="match status" value="1"/>
</dbReference>
<dbReference type="PANTHER" id="PTHR43740">
    <property type="entry name" value="LEUCYL-TRNA SYNTHETASE"/>
    <property type="match status" value="1"/>
</dbReference>
<dbReference type="Pfam" id="PF08264">
    <property type="entry name" value="Anticodon_1"/>
    <property type="match status" value="1"/>
</dbReference>
<dbReference type="Pfam" id="PF00133">
    <property type="entry name" value="tRNA-synt_1"/>
    <property type="match status" value="2"/>
</dbReference>
<dbReference type="Pfam" id="PF13603">
    <property type="entry name" value="tRNA-synt_1_2"/>
    <property type="match status" value="1"/>
</dbReference>
<dbReference type="Pfam" id="PF09334">
    <property type="entry name" value="tRNA-synt_1g"/>
    <property type="match status" value="1"/>
</dbReference>
<dbReference type="PRINTS" id="PR00985">
    <property type="entry name" value="TRNASYNTHLEU"/>
</dbReference>
<dbReference type="SUPFAM" id="SSF47323">
    <property type="entry name" value="Anticodon-binding domain of a subclass of class I aminoacyl-tRNA synthetases"/>
    <property type="match status" value="1"/>
</dbReference>
<dbReference type="SUPFAM" id="SSF52374">
    <property type="entry name" value="Nucleotidylyl transferase"/>
    <property type="match status" value="1"/>
</dbReference>
<dbReference type="SUPFAM" id="SSF50677">
    <property type="entry name" value="ValRS/IleRS/LeuRS editing domain"/>
    <property type="match status" value="1"/>
</dbReference>
<dbReference type="PROSITE" id="PS00178">
    <property type="entry name" value="AA_TRNA_LIGASE_I"/>
    <property type="match status" value="1"/>
</dbReference>
<keyword id="KW-0030">Aminoacyl-tRNA synthetase</keyword>
<keyword id="KW-0067">ATP-binding</keyword>
<keyword id="KW-0963">Cytoplasm</keyword>
<keyword id="KW-0436">Ligase</keyword>
<keyword id="KW-0547">Nucleotide-binding</keyword>
<keyword id="KW-0648">Protein biosynthesis</keyword>
<evidence type="ECO:0000255" key="1">
    <source>
        <dbReference type="HAMAP-Rule" id="MF_00049"/>
    </source>
</evidence>
<accession>Q07UN5</accession>
<gene>
    <name evidence="1" type="primary">leuS</name>
    <name type="ordered locus">RPE_0390</name>
</gene>
<organism>
    <name type="scientific">Rhodopseudomonas palustris (strain BisA53)</name>
    <dbReference type="NCBI Taxonomy" id="316055"/>
    <lineage>
        <taxon>Bacteria</taxon>
        <taxon>Pseudomonadati</taxon>
        <taxon>Pseudomonadota</taxon>
        <taxon>Alphaproteobacteria</taxon>
        <taxon>Hyphomicrobiales</taxon>
        <taxon>Nitrobacteraceae</taxon>
        <taxon>Rhodopseudomonas</taxon>
    </lineage>
</organism>
<feature type="chain" id="PRO_1000009410" description="Leucine--tRNA ligase">
    <location>
        <begin position="1"/>
        <end position="888"/>
    </location>
</feature>
<feature type="short sequence motif" description="'HIGH' region">
    <location>
        <begin position="43"/>
        <end position="53"/>
    </location>
</feature>
<feature type="short sequence motif" description="'KMSKS' region">
    <location>
        <begin position="644"/>
        <end position="648"/>
    </location>
</feature>
<feature type="binding site" evidence="1">
    <location>
        <position position="647"/>
    </location>
    <ligand>
        <name>ATP</name>
        <dbReference type="ChEBI" id="CHEBI:30616"/>
    </ligand>
</feature>
<sequence length="888" mass="99417">MTSERYNARESEPKWQRRWDDDKIFATQNDDPRPKYYVLEMFPYPSGRIHMGHVRNYTMGDVVARTMRARGFNVLHPMGWDAFGLPAENAAIERKVAPKAWTYDNIAAMKKQLQTMGLSLDWAREFATCDPSYYKHQQKMFLDFLKAGLAEREKRKINWDPVDMTVLANEQVIDGRGWRSGAVVEQREMNQWVFKITRYSQDLLDALDRLDRWPDKVRLMQRNWIGRSEGMLVRFALDAATTPAGESELKIFTTRADTLFGAKFMAIAADHPLALAAAPKNPKIKDFIDECKKRGTAQADIDTAEKQGIDTGIRAVHPFDPEWKLPVYVANFVLMEYGTGAIFGCPAHDQRDLDFVNKYDLGNTPVVCPEGQDPASFVITDVAYDGDGRLINSRFLDGLSIDQAKEEVAKRLETATRDGAPIGERKVNFRLRDWGISRQRYWGCPIPVIHCPKCDVVPVPDADLPVVLPEDVSFDKPGNALDHHPTWKHVTCPKCGGKAVRETDTMDTFVDSSWYFARFTDPWNENAPTTPDVVNKMMPVDQYIGGVEHAILHLLYSRFFTRAMKATGHVGLDEPFAGMFTQGMVVHETYRRKSGEWVSPAELDATMTIESIATDASGEAKTTTKRKVWLRETGEELEIGPIEKMSKSKRNTVDPDDIIGTYGADTARWFMLSDSPPDRDVIWSEEGVKGASRFVQRLWRIANDAAEIAKLAPADRPAEFGPDAIAVRKAAHGALHKVLNGIERLAFNVSLAHIREFANALADSLGKADKPTPDLAFAIREAAIILVQLVAPMMPHLAEECWEVLGQAGLVSEAGWPAVEPALLVEDTITLPVQVNGKKRGDVTVARDAQNPQIEAAVLALDTVKQALDGKPVRKIIIVPQRIVNVVV</sequence>